<dbReference type="EMBL" id="D00344">
    <property type="protein sequence ID" value="BAA00250.1"/>
    <property type="molecule type" value="Genomic_RNA"/>
</dbReference>
<dbReference type="PIR" id="JA0103">
    <property type="entry name" value="WMWGP2"/>
</dbReference>
<dbReference type="RefSeq" id="YP_002332930.1">
    <property type="nucleotide sequence ID" value="NC_011620.1"/>
</dbReference>
<dbReference type="KEGG" id="vg:7065755"/>
<dbReference type="Proteomes" id="UP000008687">
    <property type="component" value="Segment"/>
</dbReference>
<dbReference type="GO" id="GO:0030430">
    <property type="term" value="C:host cell cytoplasm"/>
    <property type="evidence" value="ECO:0007669"/>
    <property type="project" value="UniProtKB-SubCell"/>
</dbReference>
<dbReference type="GO" id="GO:0005524">
    <property type="term" value="F:ATP binding"/>
    <property type="evidence" value="ECO:0007669"/>
    <property type="project" value="InterPro"/>
</dbReference>
<dbReference type="GO" id="GO:0003723">
    <property type="term" value="F:RNA binding"/>
    <property type="evidence" value="ECO:0007669"/>
    <property type="project" value="UniProtKB-KW"/>
</dbReference>
<dbReference type="GO" id="GO:0052170">
    <property type="term" value="P:symbiont-mediated suppression of host innate immune response"/>
    <property type="evidence" value="ECO:0007669"/>
    <property type="project" value="UniProtKB-KW"/>
</dbReference>
<dbReference type="GO" id="GO:0046740">
    <property type="term" value="P:transport of virus in host, cell to cell"/>
    <property type="evidence" value="ECO:0007669"/>
    <property type="project" value="UniProtKB-KW"/>
</dbReference>
<dbReference type="InterPro" id="IPR027351">
    <property type="entry name" value="(+)RNA_virus_helicase_core_dom"/>
</dbReference>
<dbReference type="Pfam" id="PF01443">
    <property type="entry name" value="Viral_helicase1"/>
    <property type="match status" value="1"/>
</dbReference>
<dbReference type="PROSITE" id="PS51657">
    <property type="entry name" value="PSRV_HELICASE"/>
    <property type="match status" value="1"/>
</dbReference>
<gene>
    <name type="ORF">ORF2</name>
</gene>
<organism>
    <name type="scientific">Potato virus X (strain X3)</name>
    <name type="common">PVX</name>
    <dbReference type="NCBI Taxonomy" id="12185"/>
    <lineage>
        <taxon>Viruses</taxon>
        <taxon>Riboviria</taxon>
        <taxon>Orthornavirae</taxon>
        <taxon>Kitrinoviricota</taxon>
        <taxon>Alsuviricetes</taxon>
        <taxon>Tymovirales</taxon>
        <taxon>Alphaflexiviridae</taxon>
        <taxon>Potexvirus</taxon>
        <taxon>Potato virus X</taxon>
    </lineage>
</organism>
<accession>P17780</accession>
<reference key="1">
    <citation type="journal article" date="1988" name="J. Gen. Virol.">
        <title>The complete nucleotide sequence of potato virus X and its homologies at the amino acid level with various plus-stranded RNA viruses.</title>
        <authorList>
            <person name="Huisman M.J."/>
            <person name="Linthorst H.J.M."/>
            <person name="Bol J.F."/>
            <person name="Cornelissen B.J.C."/>
        </authorList>
    </citation>
    <scope>NUCLEOTIDE SEQUENCE [GENOMIC RNA]</scope>
</reference>
<reference key="2">
    <citation type="journal article" date="1999" name="Virology">
        <title>Evidence for two nonoverlapping functional domains in the potato virus X 25K movement protein.</title>
        <authorList>
            <person name="Morozov S.Y."/>
            <person name="Solovyev A.G."/>
            <person name="Kalinina N.O."/>
            <person name="Fedorkin O.N."/>
            <person name="Samuilova O.V."/>
            <person name="Schiemann J."/>
            <person name="Atabekov J.G."/>
        </authorList>
    </citation>
    <scope>RNA-BINDING</scope>
</reference>
<reference key="3">
    <citation type="journal article" date="2004" name="Virology">
        <title>Potato virus X TGBp1 induces plasmodesmata gating and moves between cells in several host species whereas CP moves only in N. benthamiana leaves.</title>
        <authorList>
            <person name="Howard A.R."/>
            <person name="Heppler M.L."/>
            <person name="Ju H.J."/>
            <person name="Krishnamurthy K."/>
            <person name="Payton M.E."/>
            <person name="Verchot-Lubicz J."/>
        </authorList>
    </citation>
    <scope>FUNCTION</scope>
</reference>
<reference key="4">
    <citation type="journal article" date="2007" name="Virology">
        <title>Subcellular targeting and interactions among the Potato virus X TGB proteins.</title>
        <authorList>
            <person name="Samuels T.D."/>
            <person name="Ju H.J."/>
            <person name="Ye C.M."/>
            <person name="Motes C.M."/>
            <person name="Blancaflor E.B."/>
            <person name="Verchot-Lubicz J."/>
        </authorList>
    </citation>
    <scope>SUBCELLULAR LOCATION</scope>
    <scope>INTERACTION WITH CAPSID PROTEIN</scope>
</reference>
<reference key="5">
    <citation type="journal article" date="2008" name="Biochemistry (Mosc.)">
        <title>Oligomerization of the potato virus X 25-kD movement protein.</title>
        <authorList>
            <person name="Leshchiner A.D."/>
            <person name="Minina E.A."/>
            <person name="Rakitina D.V."/>
            <person name="Vishnichenko V.K."/>
            <person name="Solovyev A.G."/>
            <person name="Morozov S.Y."/>
            <person name="Kalinina N.O."/>
        </authorList>
    </citation>
    <scope>HOMODIMERIZATION</scope>
    <scope>HOMOOLIGOMERIZATION</scope>
</reference>
<reference key="6">
    <citation type="journal article" date="2010" name="Mol. Plant Pathol.">
        <title>The silencing suppressor P25 of Potato virus X interacts with Argonaute1 and mediates its degradation through the proteasome pathway.</title>
        <authorList>
            <person name="Chiu M.H."/>
            <person name="Chen I.H."/>
            <person name="Baulcombe D.C."/>
            <person name="Tsai C.H."/>
        </authorList>
    </citation>
    <scope>FUNCTION</scope>
</reference>
<reference key="7">
    <citation type="journal article" date="2005" name="Mol. Plant Microbe Interact.">
        <title>A new cell-to-cell transport model for Potexviruses.</title>
        <authorList>
            <person name="Verchot-Lubicz J."/>
        </authorList>
    </citation>
    <scope>REVIEW</scope>
</reference>
<feature type="chain" id="PRO_0000222573" description="Movement and silencing protein TGBp1">
    <location>
        <begin position="1"/>
        <end position="226"/>
    </location>
</feature>
<feature type="domain" description="(+)RNA virus helicase ATP-binding">
    <location>
        <begin position="1"/>
        <end position="115"/>
    </location>
</feature>
<feature type="domain" description="(+)RNA virus helicase C-terminal">
    <location>
        <begin position="116"/>
        <end position="226"/>
    </location>
</feature>
<evidence type="ECO:0000269" key="1">
    <source>
    </source>
</evidence>
<evidence type="ECO:0000269" key="2">
    <source>
    </source>
</evidence>
<evidence type="ECO:0000269" key="3">
    <source>
    </source>
</evidence>
<evidence type="ECO:0000305" key="4"/>
<proteinExistence type="evidence at protein level"/>
<organismHost>
    <name type="scientific">Brassica campestris</name>
    <name type="common">Field mustard</name>
    <dbReference type="NCBI Taxonomy" id="3711"/>
</organismHost>
<organismHost>
    <name type="scientific">Solanum tuberosum</name>
    <name type="common">Potato</name>
    <dbReference type="NCBI Taxonomy" id="4113"/>
</organismHost>
<sequence length="226" mass="24596">MDILISSLKSLGYSRTSKSLDSGPLVVHAVAGAGKSTALRKLILRHPTFTVHTLGVPDKVSIRTRGIQKPGPIPEGNFAILDEYTLDNTTRNSYQALFADPYQAPEFSLEPHFYLETSFRVPRKVADLIAGCGFDFETNSQEEGHLEITGIFKGPLLGKVIAIDEESETTLSRHGVEFVKPCQVTGLELKVVTIVSAAPIEEIGQSTAFYNAITRSKGLTYVRAGT</sequence>
<protein>
    <recommendedName>
        <fullName>Movement and silencing protein TGBp1</fullName>
    </recommendedName>
    <alternativeName>
        <fullName>25 kDa protein</fullName>
    </alternativeName>
    <alternativeName>
        <fullName>Silencing suppressor P25</fullName>
    </alternativeName>
    <alternativeName>
        <fullName>Triple gene block 1 protein</fullName>
        <shortName>TGBp1</shortName>
    </alternativeName>
</protein>
<name>TGB1_PVXX3</name>
<keyword id="KW-1035">Host cytoplasm</keyword>
<keyword id="KW-0945">Host-virus interaction</keyword>
<keyword id="KW-1090">Inhibition of host innate immune response by virus</keyword>
<keyword id="KW-1185">Reference proteome</keyword>
<keyword id="KW-0694">RNA-binding</keyword>
<keyword id="KW-0941">Suppressor of RNA silencing</keyword>
<keyword id="KW-0813">Transport</keyword>
<keyword id="KW-0899">Viral immunoevasion</keyword>
<keyword id="KW-0916">Viral movement protein</keyword>
<comment type="function">
    <text evidence="1 3">Transports viral genome to neighboring plant cells directly through plasmosdesmata, without any budding. The movement protein allows efficient cell to cell propagation, by bypassing the host cell wall barrier. Increases plasmodesma size exclusion limit. Acts as a suppressor of RNA-mediated gene silencing, also known as post-transcriptional gene silencing (PTGS), a mechanism of plant viral defense that limits the accumulation of viral RNAs.</text>
</comment>
<comment type="subunit">
    <text evidence="2">Homodimer and homooligomer. Interacts with capsid protein. Interacts with host AGO1; this interaction targets the host protein for degradation, thereby suppressing the antiviral RNA silencing.</text>
</comment>
<comment type="subcellular location">
    <subcellularLocation>
        <location evidence="2">Host cytoplasm</location>
    </subcellularLocation>
</comment>
<comment type="miscellaneous">
    <text>TGBp1, TGBp2 and TGBp3 seem to act together for cell-to-cell propagation. TGBp1 is the main movement protein that physically cross the plasmodesma with the viral genome. TGBp2 and TGBp3 would facilitate TGBp1 function.</text>
</comment>
<comment type="similarity">
    <text evidence="4">Belongs to the Tymovirales TGBp1 protein family.</text>
</comment>